<organism>
    <name type="scientific">Bos taurus</name>
    <name type="common">Bovine</name>
    <dbReference type="NCBI Taxonomy" id="9913"/>
    <lineage>
        <taxon>Eukaryota</taxon>
        <taxon>Metazoa</taxon>
        <taxon>Chordata</taxon>
        <taxon>Craniata</taxon>
        <taxon>Vertebrata</taxon>
        <taxon>Euteleostomi</taxon>
        <taxon>Mammalia</taxon>
        <taxon>Eutheria</taxon>
        <taxon>Laurasiatheria</taxon>
        <taxon>Artiodactyla</taxon>
        <taxon>Ruminantia</taxon>
        <taxon>Pecora</taxon>
        <taxon>Bovidae</taxon>
        <taxon>Bovinae</taxon>
        <taxon>Bos</taxon>
    </lineage>
</organism>
<accession>Q95114</accession>
<accession>P79344</accession>
<accession>Q27959</accession>
<dbReference type="EMBL" id="X91895">
    <property type="protein sequence ID" value="CAA62997.1"/>
    <property type="molecule type" value="mRNA"/>
</dbReference>
<dbReference type="EMBL" id="S80643">
    <property type="protein sequence ID" value="AAB35894.2"/>
    <property type="molecule type" value="mRNA"/>
</dbReference>
<dbReference type="EMBL" id="Y11719">
    <property type="protein sequence ID" value="CAA72406.1"/>
    <property type="molecule type" value="mRNA"/>
</dbReference>
<dbReference type="PIR" id="S74211">
    <property type="entry name" value="S74211"/>
</dbReference>
<dbReference type="RefSeq" id="NP_788783.1">
    <property type="nucleotide sequence ID" value="NM_176610.1"/>
</dbReference>
<dbReference type="PDB" id="2PQS">
    <property type="method" value="X-ray"/>
    <property type="resolution" value="2.40 A"/>
    <property type="chains" value="A/B/C/D=270-427"/>
</dbReference>
<dbReference type="PDB" id="3BN6">
    <property type="method" value="X-ray"/>
    <property type="resolution" value="1.67 A"/>
    <property type="chains" value="A=270-427"/>
</dbReference>
<dbReference type="PDBsum" id="2PQS"/>
<dbReference type="PDBsum" id="3BN6"/>
<dbReference type="SMR" id="Q95114"/>
<dbReference type="CORUM" id="Q95114"/>
<dbReference type="FunCoup" id="Q95114">
    <property type="interactions" value="204"/>
</dbReference>
<dbReference type="STRING" id="9913.ENSBTAP00000004272"/>
<dbReference type="GlyCosmos" id="Q95114">
    <property type="glycosylation" value="4 sites, No reported glycans"/>
</dbReference>
<dbReference type="GlyGen" id="Q95114">
    <property type="glycosylation" value="4 sites"/>
</dbReference>
<dbReference type="iPTMnet" id="Q95114"/>
<dbReference type="PaxDb" id="9913-ENSBTAP00000004272"/>
<dbReference type="PeptideAtlas" id="Q95114"/>
<dbReference type="GeneID" id="281913"/>
<dbReference type="KEGG" id="bta:281913"/>
<dbReference type="CTD" id="4240"/>
<dbReference type="eggNOG" id="ENOG502RXUZ">
    <property type="taxonomic scope" value="Eukaryota"/>
</dbReference>
<dbReference type="InParanoid" id="Q95114"/>
<dbReference type="OrthoDB" id="2121828at2759"/>
<dbReference type="EvolutionaryTrace" id="Q95114"/>
<dbReference type="Proteomes" id="UP000009136">
    <property type="component" value="Unplaced"/>
</dbReference>
<dbReference type="GO" id="GO:0002080">
    <property type="term" value="C:acrosomal membrane"/>
    <property type="evidence" value="ECO:0007669"/>
    <property type="project" value="UniProtKB-SubCell"/>
</dbReference>
<dbReference type="GO" id="GO:0005576">
    <property type="term" value="C:extracellular region"/>
    <property type="evidence" value="ECO:0007669"/>
    <property type="project" value="UniProtKB-SubCell"/>
</dbReference>
<dbReference type="GO" id="GO:0001525">
    <property type="term" value="P:angiogenesis"/>
    <property type="evidence" value="ECO:0007669"/>
    <property type="project" value="UniProtKB-KW"/>
</dbReference>
<dbReference type="GO" id="GO:0007155">
    <property type="term" value="P:cell adhesion"/>
    <property type="evidence" value="ECO:0007669"/>
    <property type="project" value="UniProtKB-KW"/>
</dbReference>
<dbReference type="GO" id="GO:0007338">
    <property type="term" value="P:single fertilization"/>
    <property type="evidence" value="ECO:0007669"/>
    <property type="project" value="UniProtKB-KW"/>
</dbReference>
<dbReference type="CDD" id="cd00054">
    <property type="entry name" value="EGF_CA"/>
    <property type="match status" value="2"/>
</dbReference>
<dbReference type="CDD" id="cd00057">
    <property type="entry name" value="FA58C"/>
    <property type="match status" value="2"/>
</dbReference>
<dbReference type="FunFam" id="2.60.120.260:FF:000002">
    <property type="entry name" value="Coagulation factor VIII"/>
    <property type="match status" value="2"/>
</dbReference>
<dbReference type="Gene3D" id="2.60.120.260">
    <property type="entry name" value="Galactose-binding domain-like"/>
    <property type="match status" value="2"/>
</dbReference>
<dbReference type="Gene3D" id="2.10.25.10">
    <property type="entry name" value="Laminin"/>
    <property type="match status" value="2"/>
</dbReference>
<dbReference type="InterPro" id="IPR000742">
    <property type="entry name" value="EGF-like_dom"/>
</dbReference>
<dbReference type="InterPro" id="IPR000421">
    <property type="entry name" value="FA58C"/>
</dbReference>
<dbReference type="InterPro" id="IPR008979">
    <property type="entry name" value="Galactose-bd-like_sf"/>
</dbReference>
<dbReference type="InterPro" id="IPR050633">
    <property type="entry name" value="Neuropilin_MCO_CoagFactor"/>
</dbReference>
<dbReference type="PANTHER" id="PTHR46806">
    <property type="entry name" value="F5/8 TYPE C DOMAIN-CONTAINING PROTEIN"/>
    <property type="match status" value="1"/>
</dbReference>
<dbReference type="PANTHER" id="PTHR46806:SF11">
    <property type="entry name" value="MILK FAT GLOBULE EGF AND FACTOR V_VIII DOMAIN CONTAINING"/>
    <property type="match status" value="1"/>
</dbReference>
<dbReference type="Pfam" id="PF00008">
    <property type="entry name" value="EGF"/>
    <property type="match status" value="2"/>
</dbReference>
<dbReference type="Pfam" id="PF00754">
    <property type="entry name" value="F5_F8_type_C"/>
    <property type="match status" value="2"/>
</dbReference>
<dbReference type="SMART" id="SM00181">
    <property type="entry name" value="EGF"/>
    <property type="match status" value="2"/>
</dbReference>
<dbReference type="SMART" id="SM00231">
    <property type="entry name" value="FA58C"/>
    <property type="match status" value="2"/>
</dbReference>
<dbReference type="SUPFAM" id="SSF57196">
    <property type="entry name" value="EGF/Laminin"/>
    <property type="match status" value="2"/>
</dbReference>
<dbReference type="SUPFAM" id="SSF49785">
    <property type="entry name" value="Galactose-binding domain-like"/>
    <property type="match status" value="2"/>
</dbReference>
<dbReference type="PROSITE" id="PS00022">
    <property type="entry name" value="EGF_1"/>
    <property type="match status" value="2"/>
</dbReference>
<dbReference type="PROSITE" id="PS01186">
    <property type="entry name" value="EGF_2"/>
    <property type="match status" value="2"/>
</dbReference>
<dbReference type="PROSITE" id="PS50026">
    <property type="entry name" value="EGF_3"/>
    <property type="match status" value="2"/>
</dbReference>
<dbReference type="PROSITE" id="PS01285">
    <property type="entry name" value="FA58C_1"/>
    <property type="match status" value="2"/>
</dbReference>
<dbReference type="PROSITE" id="PS01286">
    <property type="entry name" value="FA58C_2"/>
    <property type="match status" value="2"/>
</dbReference>
<dbReference type="PROSITE" id="PS50022">
    <property type="entry name" value="FA58C_3"/>
    <property type="match status" value="2"/>
</dbReference>
<evidence type="ECO:0000250" key="1"/>
<evidence type="ECO:0000250" key="2">
    <source>
        <dbReference type="UniProtKB" id="P79385"/>
    </source>
</evidence>
<evidence type="ECO:0000255" key="3">
    <source>
        <dbReference type="PROSITE-ProRule" id="PRU00076"/>
    </source>
</evidence>
<evidence type="ECO:0000255" key="4">
    <source>
        <dbReference type="PROSITE-ProRule" id="PRU00081"/>
    </source>
</evidence>
<evidence type="ECO:0000269" key="5">
    <source>
    </source>
</evidence>
<evidence type="ECO:0000269" key="6">
    <source>
    </source>
</evidence>
<evidence type="ECO:0000269" key="7">
    <source>
    </source>
</evidence>
<evidence type="ECO:0000305" key="8"/>
<evidence type="ECO:0007829" key="9">
    <source>
        <dbReference type="PDB" id="3BN6"/>
    </source>
</evidence>
<protein>
    <recommendedName>
        <fullName>Lactadherin</fullName>
    </recommendedName>
    <alternativeName>
        <fullName>BP47</fullName>
    </alternativeName>
    <alternativeName>
        <fullName>Components 15/16</fullName>
    </alternativeName>
    <alternativeName>
        <fullName>MFGM</fullName>
    </alternativeName>
    <alternativeName>
        <fullName>MGP57/53</fullName>
    </alternativeName>
    <alternativeName>
        <fullName>Milk fat globule-EGF factor 8</fullName>
        <shortName>MFG-E8</shortName>
    </alternativeName>
    <alternativeName>
        <fullName>PAS-6/PAS-7 glycoprotein</fullName>
    </alternativeName>
    <alternativeName>
        <fullName>SED1</fullName>
    </alternativeName>
    <alternativeName>
        <fullName>Sperm surface protein SP47</fullName>
    </alternativeName>
</protein>
<gene>
    <name type="primary">MFGE8</name>
</gene>
<keyword id="KW-0002">3D-structure</keyword>
<keyword id="KW-0025">Alternative splicing</keyword>
<keyword id="KW-0037">Angiogenesis</keyword>
<keyword id="KW-0130">Cell adhesion</keyword>
<keyword id="KW-0968">Cytoplasmic vesicle</keyword>
<keyword id="KW-0903">Direct protein sequencing</keyword>
<keyword id="KW-1015">Disulfide bond</keyword>
<keyword id="KW-0245">EGF-like domain</keyword>
<keyword id="KW-0278">Fertilization</keyword>
<keyword id="KW-0325">Glycoprotein</keyword>
<keyword id="KW-0472">Membrane</keyword>
<keyword id="KW-1185">Reference proteome</keyword>
<keyword id="KW-0677">Repeat</keyword>
<keyword id="KW-0964">Secreted</keyword>
<keyword id="KW-0732">Signal</keyword>
<proteinExistence type="evidence at protein level"/>
<name>MFGM_BOVIN</name>
<sequence>MPCPRLLAALFCSSGLFAASGDFCDSSLCLHGGTCLLNEDRTPPFYCLCPEGFTGLLCNETEHGPCFPNPCHNDAECQVTDDSHRGDVFIQYICKCPLGYVGIHCETTCTSPLGMQTGAIADSQISASSMHLGFMGLQRWAPELARLHQTGIVNAWTSGNYDKNPWIQVNLMRKMWVTGVVTQGASRAGSAEYLKTFKVAYSTDGRQFQFIQVAGRSGDKIFIGNVNNSGLKINLFDTPLETQYVRLVPIICHRGCTLRFELLGCELNGCTEPLGLKDNTIPNKQITASSYYKTWGLSAFSWFPYYARLDNQGKFNAWTAQTNSASEWLQIDLGSQKRVTGIITQGARDFGHIQYVAAYRVAYGDDGVTWTEYKDPGASESKIFPGNMDNNSHKKNIFETPFQARFVRIQPVAWHNRITLRVELLGC</sequence>
<comment type="function">
    <text evidence="1 5">Contributes to phagocytic removal of apoptotic cells in many tissues. Plays an important role in the maintenance of intestinal epithelial homeostasis and the promotion of mucosal healing. Promotes VEGF-dependent neovascularization (By similarity). Specific ligand for the alpha-v/beta-3 and alpha-v/beta-5 receptors. Also binds to phosphatidylserine-enriched cell surfaces in a receptor-independent manner. Zona pellucida-binding protein which may play a role in gamete interaction.</text>
</comment>
<comment type="subcellular location">
    <subcellularLocation>
        <location evidence="2">Membrane</location>
        <topology evidence="2">Peripheral membrane protein</topology>
    </subcellularLocation>
    <subcellularLocation>
        <location evidence="2">Secreted</location>
    </subcellularLocation>
    <subcellularLocation>
        <location evidence="2">Cytoplasmic vesicle</location>
        <location evidence="2">Secretory vesicle</location>
        <location evidence="2">Acrosome membrane</location>
        <topology evidence="2">Peripheral membrane protein</topology>
    </subcellularLocation>
    <text evidence="2">Located in the acrosomal region of zona-pellucida bound sperm.</text>
</comment>
<comment type="alternative products">
    <event type="alternative splicing"/>
    <isoform>
        <id>Q95114-1</id>
        <name>Long</name>
        <sequence type="displayed"/>
    </isoform>
    <isoform>
        <id>Q95114-2</id>
        <name>Short</name>
        <sequence type="described" ref="VSP_001398"/>
    </isoform>
</comment>
<comment type="tissue specificity">
    <text evidence="7">Milk and spermatozoan. Also present in epididymis, kidney, heart, lymphatic gland and spleen but not esophagus, small intestine, muscle and liver.</text>
</comment>
<comment type="domain">
    <text evidence="1">The F5/8 type C 2 domain mediates high-affinity binding to phosphatidylserine-containing membranes.</text>
</comment>
<comment type="PTM">
    <text evidence="6">The two O-linked glycans consist of Gal, GlcNAc and Fuc, with probably Fuc as reducing terminal sugar.</text>
</comment>
<reference key="1">
    <citation type="journal article" date="1996" name="Eur. J. Biochem.">
        <title>Characterization of glycoprotein PAS-6/7 from membranes of bovine milk fat globules.</title>
        <authorList>
            <person name="Hvarregaard J."/>
            <person name="Andersen M.H."/>
            <person name="Berglund L."/>
            <person name="Rasmussen J.T."/>
            <person name="Petersen T.E."/>
        </authorList>
    </citation>
    <scope>NUCLEOTIDE SEQUENCE [MRNA]</scope>
    <scope>PARTIAL PROTEIN SEQUENCE</scope>
    <scope>GLYCOSYLATION AT SER-27; THR-34; ASN-59 AND ASN-227</scope>
    <source>
        <strain>Holstein</strain>
        <tissue>Mammary gland</tissue>
    </source>
</reference>
<reference key="2">
    <citation type="journal article" date="1995" name="Biochim. Biophys. Acta">
        <title>Molecular cloning of glycoprotein antigens MGP57/53 recognized by monoclonal antibodies raised against bovine milk fat globule membrane.</title>
        <authorList>
            <person name="Aoki N."/>
            <person name="Kishi M."/>
            <person name="Taniguchi Y."/>
            <person name="Adachi T."/>
            <person name="Nakamura R."/>
            <person name="Matsuda T."/>
        </authorList>
    </citation>
    <scope>NUCLEOTIDE SEQUENCE [MRNA] OF 18-427</scope>
    <source>
        <tissue>Mammary gland</tissue>
    </source>
</reference>
<reference key="3">
    <citation type="journal article" date="1998" name="Biol. Reprod.">
        <title>Molecular cloning and characterization of P47, a novel boar sperm-associated zona pellucida-binding protein homologous to a family of mammalian secretory proteins.</title>
        <authorList>
            <person name="Ensslin M.A."/>
            <person name="Vogel T."/>
            <person name="Calvete J.J."/>
            <person name="Thole H.H."/>
            <person name="Schmidtke J."/>
            <person name="Matsuda T."/>
            <person name="Toepfer-Petersen E."/>
        </authorList>
    </citation>
    <scope>NUCLEOTIDE SEQUENCE [MRNA] OF 19-427</scope>
    <scope>TISSUE SPECIFICITY</scope>
    <source>
        <tissue>Testis</tissue>
    </source>
</reference>
<reference key="4">
    <citation type="journal article" date="1993" name="Biochem. Mol. Biol. Int.">
        <title>The major fat-globule membrane proteins, bovine components 15/16 and guinea-pig GP 55, are homologous to MGF-E8, a murine glycoprotein containing epidermal growth factor-like and factor V/VIII-like sequences.</title>
        <authorList>
            <person name="Mather I.H."/>
            <person name="Banghart L.R."/>
            <person name="Lane W.S."/>
        </authorList>
    </citation>
    <scope>PROTEIN SEQUENCE OF 140-146; 174-187; 233-246 AND 422-427</scope>
    <source>
        <tissue>Milk</tissue>
    </source>
</reference>
<reference key="5">
    <citation type="journal article" date="1992" name="Biochim. Biophys. Acta">
        <title>Purification and characterization of major glycoproteins, PAS-6 and PAS-7, from bovine milk fat globule membrane.</title>
        <authorList>
            <person name="Kim D.H."/>
            <person name="Kanno C."/>
            <person name="Mizokami Y."/>
        </authorList>
    </citation>
    <scope>PROTEIN SEQUENCE OF 383-394</scope>
</reference>
<reference key="6">
    <citation type="journal article" date="2000" name="Biochemistry">
        <title>Functional analyses of two cellular binding domains of bovine lactadherin.</title>
        <authorList>
            <person name="Andersen M.H."/>
            <person name="Graversen H."/>
            <person name="Fedosov S.N."/>
            <person name="Petersen T.E."/>
            <person name="Rasmussen J.T."/>
        </authorList>
    </citation>
    <scope>FUNCTION</scope>
</reference>
<reference key="7">
    <citation type="journal article" date="2007" name="J. Mol. Biol.">
        <title>Crystal structure of the bovine lactadherin C2 domain, a membrane binding motif, shows similarity to the C2 domains of factor V and factor VIII.</title>
        <authorList>
            <person name="Lin L."/>
            <person name="Huai Q."/>
            <person name="Huang M."/>
            <person name="Furie B."/>
            <person name="Furie B.C."/>
        </authorList>
    </citation>
    <scope>X-RAY CRYSTALLOGRAPHY (2.4 ANGSTROMS) OF 270-427</scope>
</reference>
<reference key="8">
    <citation type="journal article" date="2008" name="J. Biol. Chem.">
        <title>Crystal structure of lactadherin C2 domain at 1.7A resolution with mutational and computational analyses of its membrane-binding motif.</title>
        <authorList>
            <person name="Shao C."/>
            <person name="Novakovic V.A."/>
            <person name="Head J.F."/>
            <person name="Seaton B.A."/>
            <person name="Gilbert G.E."/>
        </authorList>
    </citation>
    <scope>X-RAY CRYSTALLOGRAPHY (1.67 ANGSTROMS) OF 270-427</scope>
</reference>
<feature type="signal peptide">
    <location>
        <begin position="1"/>
        <end position="18"/>
    </location>
</feature>
<feature type="chain" id="PRO_0000007649" description="Lactadherin">
    <location>
        <begin position="19"/>
        <end position="427"/>
    </location>
</feature>
<feature type="domain" description="EGF-like 1" evidence="3">
    <location>
        <begin position="20"/>
        <end position="59"/>
    </location>
</feature>
<feature type="domain" description="EGF-like 2" evidence="3">
    <location>
        <begin position="62"/>
        <end position="106"/>
    </location>
</feature>
<feature type="domain" description="F5/8 type C 1" evidence="4">
    <location>
        <begin position="109"/>
        <end position="265"/>
    </location>
</feature>
<feature type="domain" description="F5/8 type C 2" evidence="4">
    <location>
        <begin position="270"/>
        <end position="427"/>
    </location>
</feature>
<feature type="short sequence motif" description="Cell attachment site">
    <location>
        <begin position="85"/>
        <end position="87"/>
    </location>
</feature>
<feature type="glycosylation site" description="O-linked (Fuc...) serine; in PAS-6" evidence="6">
    <location>
        <position position="27"/>
    </location>
</feature>
<feature type="glycosylation site" description="O-linked (Fuc...) threonine; in PAS-7" evidence="6">
    <location>
        <position position="34"/>
    </location>
</feature>
<feature type="glycosylation site" description="N-linked (GlcNAc...) (hybrid) asparagine; in PAS-6 and PAS-7" evidence="6">
    <location>
        <position position="59"/>
    </location>
</feature>
<feature type="glycosylation site" description="N-linked (GlcNAc...) (high mannose) asparagine; in PAS-6" evidence="6">
    <location>
        <position position="227"/>
    </location>
</feature>
<feature type="disulfide bond" evidence="1">
    <location>
        <begin position="24"/>
        <end position="35"/>
    </location>
</feature>
<feature type="disulfide bond" evidence="1">
    <location>
        <begin position="29"/>
        <end position="47"/>
    </location>
</feature>
<feature type="disulfide bond" evidence="1">
    <location>
        <begin position="49"/>
        <end position="58"/>
    </location>
</feature>
<feature type="disulfide bond" evidence="1">
    <location>
        <begin position="66"/>
        <end position="77"/>
    </location>
</feature>
<feature type="disulfide bond" evidence="1">
    <location>
        <begin position="71"/>
        <end position="94"/>
    </location>
</feature>
<feature type="disulfide bond" evidence="1">
    <location>
        <begin position="96"/>
        <end position="105"/>
    </location>
</feature>
<feature type="disulfide bond" evidence="6">
    <location>
        <begin position="109"/>
        <end position="265"/>
    </location>
</feature>
<feature type="disulfide bond" evidence="6">
    <location>
        <begin position="252"/>
        <end position="256"/>
    </location>
</feature>
<feature type="disulfide bond" evidence="6">
    <location>
        <begin position="270"/>
        <end position="427"/>
    </location>
</feature>
<feature type="splice variant" id="VSP_001398" description="In isoform Short." evidence="8">
    <location>
        <begin position="169"/>
        <end position="221"/>
    </location>
</feature>
<feature type="sequence conflict" description="In Ref. 1; CAA62997." evidence="8" ref="1">
    <original>A</original>
    <variation>F</variation>
    <location>
        <position position="19"/>
    </location>
</feature>
<feature type="sequence conflict" description="In Ref. 1; CAA62997." evidence="8" ref="1">
    <original>L</original>
    <variation>Q</variation>
    <location>
        <position position="28"/>
    </location>
</feature>
<feature type="helix" evidence="9">
    <location>
        <begin position="283"/>
        <end position="285"/>
    </location>
</feature>
<feature type="strand" evidence="9">
    <location>
        <begin position="286"/>
        <end position="289"/>
    </location>
</feature>
<feature type="helix" evidence="9">
    <location>
        <begin position="294"/>
        <end position="296"/>
    </location>
</feature>
<feature type="helix" evidence="9">
    <location>
        <begin position="298"/>
        <end position="300"/>
    </location>
</feature>
<feature type="helix" evidence="9">
    <location>
        <begin position="304"/>
        <end position="306"/>
    </location>
</feature>
<feature type="strand" evidence="9">
    <location>
        <begin position="313"/>
        <end position="315"/>
    </location>
</feature>
<feature type="strand" evidence="9">
    <location>
        <begin position="317"/>
        <end position="319"/>
    </location>
</feature>
<feature type="strand" evidence="9">
    <location>
        <begin position="329"/>
        <end position="345"/>
    </location>
</feature>
<feature type="strand" evidence="9">
    <location>
        <begin position="347"/>
        <end position="349"/>
    </location>
</feature>
<feature type="strand" evidence="9">
    <location>
        <begin position="352"/>
        <end position="369"/>
    </location>
</feature>
<feature type="strand" evidence="9">
    <location>
        <begin position="388"/>
        <end position="391"/>
    </location>
</feature>
<feature type="strand" evidence="9">
    <location>
        <begin position="394"/>
        <end position="417"/>
    </location>
</feature>
<feature type="strand" evidence="9">
    <location>
        <begin position="419"/>
        <end position="426"/>
    </location>
</feature>